<protein>
    <recommendedName>
        <fullName evidence="1">Putative membrane protein insertion efficiency factor</fullName>
    </recommendedName>
</protein>
<accession>Q5P4P3</accession>
<dbReference type="EMBL" id="CR555306">
    <property type="protein sequence ID" value="CAI07719.1"/>
    <property type="molecule type" value="Genomic_DNA"/>
</dbReference>
<dbReference type="RefSeq" id="WP_011237434.1">
    <property type="nucleotide sequence ID" value="NC_006513.1"/>
</dbReference>
<dbReference type="STRING" id="76114.ebB89"/>
<dbReference type="KEGG" id="eba:ebB89"/>
<dbReference type="eggNOG" id="COG0759">
    <property type="taxonomic scope" value="Bacteria"/>
</dbReference>
<dbReference type="HOGENOM" id="CLU_144811_6_1_4"/>
<dbReference type="Proteomes" id="UP000006552">
    <property type="component" value="Chromosome"/>
</dbReference>
<dbReference type="GO" id="GO:0005886">
    <property type="term" value="C:plasma membrane"/>
    <property type="evidence" value="ECO:0007669"/>
    <property type="project" value="UniProtKB-SubCell"/>
</dbReference>
<dbReference type="HAMAP" id="MF_00386">
    <property type="entry name" value="UPF0161_YidD"/>
    <property type="match status" value="1"/>
</dbReference>
<dbReference type="InterPro" id="IPR002696">
    <property type="entry name" value="Membr_insert_effic_factor_YidD"/>
</dbReference>
<dbReference type="NCBIfam" id="TIGR00278">
    <property type="entry name" value="membrane protein insertion efficiency factor YidD"/>
    <property type="match status" value="1"/>
</dbReference>
<dbReference type="PANTHER" id="PTHR33383">
    <property type="entry name" value="MEMBRANE PROTEIN INSERTION EFFICIENCY FACTOR-RELATED"/>
    <property type="match status" value="1"/>
</dbReference>
<dbReference type="PANTHER" id="PTHR33383:SF1">
    <property type="entry name" value="MEMBRANE PROTEIN INSERTION EFFICIENCY FACTOR-RELATED"/>
    <property type="match status" value="1"/>
</dbReference>
<dbReference type="Pfam" id="PF01809">
    <property type="entry name" value="YidD"/>
    <property type="match status" value="1"/>
</dbReference>
<dbReference type="SMART" id="SM01234">
    <property type="entry name" value="Haemolytic"/>
    <property type="match status" value="1"/>
</dbReference>
<organism>
    <name type="scientific">Aromatoleum aromaticum (strain DSM 19018 / LMG 30748 / EbN1)</name>
    <name type="common">Azoarcus sp. (strain EbN1)</name>
    <dbReference type="NCBI Taxonomy" id="76114"/>
    <lineage>
        <taxon>Bacteria</taxon>
        <taxon>Pseudomonadati</taxon>
        <taxon>Pseudomonadota</taxon>
        <taxon>Betaproteobacteria</taxon>
        <taxon>Rhodocyclales</taxon>
        <taxon>Rhodocyclaceae</taxon>
        <taxon>Aromatoleum</taxon>
    </lineage>
</organism>
<reference key="1">
    <citation type="journal article" date="2005" name="Arch. Microbiol.">
        <title>The genome sequence of an anaerobic aromatic-degrading denitrifying bacterium, strain EbN1.</title>
        <authorList>
            <person name="Rabus R."/>
            <person name="Kube M."/>
            <person name="Heider J."/>
            <person name="Beck A."/>
            <person name="Heitmann K."/>
            <person name="Widdel F."/>
            <person name="Reinhardt R."/>
        </authorList>
    </citation>
    <scope>NUCLEOTIDE SEQUENCE [LARGE SCALE GENOMIC DNA]</scope>
    <source>
        <strain>DSM 19018 / LMG 30748 / EbN1</strain>
    </source>
</reference>
<gene>
    <name type="ordered locus">AZOSEA15940</name>
    <name type="ORF">ebB89</name>
</gene>
<sequence>MKALVLGLLRVYRYAISPMLGRNCRFHPCCSEYAQEAVERHGAMRGGWLALKRVGRCHPFHPGGYDPVP</sequence>
<feature type="chain" id="PRO_0000253072" description="Putative membrane protein insertion efficiency factor">
    <location>
        <begin position="1"/>
        <end position="69"/>
    </location>
</feature>
<evidence type="ECO:0000255" key="1">
    <source>
        <dbReference type="HAMAP-Rule" id="MF_00386"/>
    </source>
</evidence>
<keyword id="KW-0997">Cell inner membrane</keyword>
<keyword id="KW-1003">Cell membrane</keyword>
<keyword id="KW-0472">Membrane</keyword>
<keyword id="KW-1185">Reference proteome</keyword>
<proteinExistence type="inferred from homology"/>
<comment type="function">
    <text evidence="1">Could be involved in insertion of integral membrane proteins into the membrane.</text>
</comment>
<comment type="subcellular location">
    <subcellularLocation>
        <location evidence="1">Cell inner membrane</location>
        <topology evidence="1">Peripheral membrane protein</topology>
        <orientation evidence="1">Cytoplasmic side</orientation>
    </subcellularLocation>
</comment>
<comment type="similarity">
    <text evidence="1">Belongs to the UPF0161 family.</text>
</comment>
<name>YIDD_AROAE</name>